<sequence>MRKIAIYGKGGIGKSTTTQNTVAGLAEMGKKVMVVGCDPKADSTRLLLGGLTQKTVLDTLREEGEDVELEDIIKEGYGASRCTESGGPEPGVGCAGRGIITSVNMLEQLGAYDDEWGLDYVFYDVLGDVVCGGFAMPIRDGKAEEIYIVVSGEMMAMYAANNICKGILKYADAGGVRLGGLICNSRKVDNEMEMIQELARQLGTQMIHFVPRDNMVQRAEINRKTVIDFDPAHQQADEYRALAKKIDDNEMFVIPKPLEIEELEKLLIDFGIAN</sequence>
<dbReference type="EC" id="1.18.6.1" evidence="1"/>
<dbReference type="EMBL" id="CP001101">
    <property type="protein sequence ID" value="ACE04669.1"/>
    <property type="molecule type" value="Genomic_DNA"/>
</dbReference>
<dbReference type="SMR" id="B3EL81"/>
<dbReference type="STRING" id="331678.Cphamn1_1751"/>
<dbReference type="KEGG" id="cpb:Cphamn1_1751"/>
<dbReference type="eggNOG" id="COG1348">
    <property type="taxonomic scope" value="Bacteria"/>
</dbReference>
<dbReference type="HOGENOM" id="CLU_059373_0_0_10"/>
<dbReference type="OrthoDB" id="9778641at2"/>
<dbReference type="GO" id="GO:0051539">
    <property type="term" value="F:4 iron, 4 sulfur cluster binding"/>
    <property type="evidence" value="ECO:0007669"/>
    <property type="project" value="UniProtKB-KW"/>
</dbReference>
<dbReference type="GO" id="GO:0005524">
    <property type="term" value="F:ATP binding"/>
    <property type="evidence" value="ECO:0007669"/>
    <property type="project" value="UniProtKB-UniRule"/>
</dbReference>
<dbReference type="GO" id="GO:0046872">
    <property type="term" value="F:metal ion binding"/>
    <property type="evidence" value="ECO:0007669"/>
    <property type="project" value="UniProtKB-KW"/>
</dbReference>
<dbReference type="GO" id="GO:0016163">
    <property type="term" value="F:nitrogenase activity"/>
    <property type="evidence" value="ECO:0007669"/>
    <property type="project" value="UniProtKB-UniRule"/>
</dbReference>
<dbReference type="GO" id="GO:0009399">
    <property type="term" value="P:nitrogen fixation"/>
    <property type="evidence" value="ECO:0007669"/>
    <property type="project" value="UniProtKB-UniRule"/>
</dbReference>
<dbReference type="CDD" id="cd02040">
    <property type="entry name" value="NifH"/>
    <property type="match status" value="1"/>
</dbReference>
<dbReference type="Gene3D" id="3.40.50.300">
    <property type="entry name" value="P-loop containing nucleotide triphosphate hydrolases"/>
    <property type="match status" value="1"/>
</dbReference>
<dbReference type="HAMAP" id="MF_00533">
    <property type="entry name" value="NifH"/>
    <property type="match status" value="1"/>
</dbReference>
<dbReference type="InterPro" id="IPR030655">
    <property type="entry name" value="NifH/chlL_CS"/>
</dbReference>
<dbReference type="InterPro" id="IPR000392">
    <property type="entry name" value="NifH/frxC"/>
</dbReference>
<dbReference type="InterPro" id="IPR005977">
    <property type="entry name" value="Nitrogenase_Fe_NifH"/>
</dbReference>
<dbReference type="InterPro" id="IPR027417">
    <property type="entry name" value="P-loop_NTPase"/>
</dbReference>
<dbReference type="NCBIfam" id="TIGR01287">
    <property type="entry name" value="nifH"/>
    <property type="match status" value="1"/>
</dbReference>
<dbReference type="PANTHER" id="PTHR42864">
    <property type="entry name" value="LIGHT-INDEPENDENT PROTOCHLOROPHYLLIDE REDUCTASE IRON-SULFUR ATP-BINDING PROTEIN"/>
    <property type="match status" value="1"/>
</dbReference>
<dbReference type="PANTHER" id="PTHR42864:SF2">
    <property type="entry name" value="LIGHT-INDEPENDENT PROTOCHLOROPHYLLIDE REDUCTASE IRON-SULFUR ATP-BINDING PROTEIN"/>
    <property type="match status" value="1"/>
</dbReference>
<dbReference type="Pfam" id="PF00142">
    <property type="entry name" value="Fer4_NifH"/>
    <property type="match status" value="1"/>
</dbReference>
<dbReference type="PIRSF" id="PIRSF000363">
    <property type="entry name" value="Nitrogenase_iron"/>
    <property type="match status" value="1"/>
</dbReference>
<dbReference type="PRINTS" id="PR00091">
    <property type="entry name" value="NITROGNASEII"/>
</dbReference>
<dbReference type="SUPFAM" id="SSF52540">
    <property type="entry name" value="P-loop containing nucleoside triphosphate hydrolases"/>
    <property type="match status" value="1"/>
</dbReference>
<dbReference type="PROSITE" id="PS00746">
    <property type="entry name" value="NIFH_FRXC_1"/>
    <property type="match status" value="1"/>
</dbReference>
<dbReference type="PROSITE" id="PS00692">
    <property type="entry name" value="NIFH_FRXC_2"/>
    <property type="match status" value="1"/>
</dbReference>
<dbReference type="PROSITE" id="PS51026">
    <property type="entry name" value="NIFH_FRXC_3"/>
    <property type="match status" value="1"/>
</dbReference>
<feature type="chain" id="PRO_1000211857" description="Nitrogenase iron protein">
    <location>
        <begin position="1"/>
        <end position="274"/>
    </location>
</feature>
<feature type="binding site" evidence="1">
    <location>
        <begin position="8"/>
        <end position="15"/>
    </location>
    <ligand>
        <name>ATP</name>
        <dbReference type="ChEBI" id="CHEBI:30616"/>
    </ligand>
</feature>
<feature type="binding site" evidence="1">
    <location>
        <position position="94"/>
    </location>
    <ligand>
        <name>[4Fe-4S] cluster</name>
        <dbReference type="ChEBI" id="CHEBI:49883"/>
        <note>ligand shared between dimeric partners</note>
    </ligand>
</feature>
<feature type="binding site" evidence="1">
    <location>
        <position position="131"/>
    </location>
    <ligand>
        <name>[4Fe-4S] cluster</name>
        <dbReference type="ChEBI" id="CHEBI:49883"/>
        <note>ligand shared between dimeric partners</note>
    </ligand>
</feature>
<feature type="modified residue" description="ADP-ribosylarginine; by dinitrogenase reductase ADP-ribosyltransferase" evidence="1">
    <location>
        <position position="97"/>
    </location>
</feature>
<keyword id="KW-0004">4Fe-4S</keyword>
<keyword id="KW-0013">ADP-ribosylation</keyword>
<keyword id="KW-0067">ATP-binding</keyword>
<keyword id="KW-0408">Iron</keyword>
<keyword id="KW-0411">Iron-sulfur</keyword>
<keyword id="KW-0479">Metal-binding</keyword>
<keyword id="KW-0535">Nitrogen fixation</keyword>
<keyword id="KW-0547">Nucleotide-binding</keyword>
<keyword id="KW-0560">Oxidoreductase</keyword>
<gene>
    <name evidence="1" type="primary">nifH</name>
    <name type="ordered locus">Cphamn1_1751</name>
</gene>
<organism>
    <name type="scientific">Chlorobium phaeobacteroides (strain BS1)</name>
    <dbReference type="NCBI Taxonomy" id="331678"/>
    <lineage>
        <taxon>Bacteria</taxon>
        <taxon>Pseudomonadati</taxon>
        <taxon>Chlorobiota</taxon>
        <taxon>Chlorobiia</taxon>
        <taxon>Chlorobiales</taxon>
        <taxon>Chlorobiaceae</taxon>
        <taxon>Chlorobium/Pelodictyon group</taxon>
        <taxon>Chlorobium</taxon>
    </lineage>
</organism>
<evidence type="ECO:0000255" key="1">
    <source>
        <dbReference type="HAMAP-Rule" id="MF_00533"/>
    </source>
</evidence>
<comment type="function">
    <text evidence="1">The key enzymatic reactions in nitrogen fixation are catalyzed by the nitrogenase complex, which has 2 components: the iron protein and the molybdenum-iron protein.</text>
</comment>
<comment type="catalytic activity">
    <reaction evidence="1">
        <text>N2 + 8 reduced [2Fe-2S]-[ferredoxin] + 16 ATP + 16 H2O = H2 + 8 oxidized [2Fe-2S]-[ferredoxin] + 2 NH4(+) + 16 ADP + 16 phosphate + 6 H(+)</text>
        <dbReference type="Rhea" id="RHEA:21448"/>
        <dbReference type="Rhea" id="RHEA-COMP:10000"/>
        <dbReference type="Rhea" id="RHEA-COMP:10001"/>
        <dbReference type="ChEBI" id="CHEBI:15377"/>
        <dbReference type="ChEBI" id="CHEBI:15378"/>
        <dbReference type="ChEBI" id="CHEBI:17997"/>
        <dbReference type="ChEBI" id="CHEBI:18276"/>
        <dbReference type="ChEBI" id="CHEBI:28938"/>
        <dbReference type="ChEBI" id="CHEBI:30616"/>
        <dbReference type="ChEBI" id="CHEBI:33737"/>
        <dbReference type="ChEBI" id="CHEBI:33738"/>
        <dbReference type="ChEBI" id="CHEBI:43474"/>
        <dbReference type="ChEBI" id="CHEBI:456216"/>
        <dbReference type="EC" id="1.18.6.1"/>
    </reaction>
</comment>
<comment type="cofactor">
    <cofactor evidence="1">
        <name>[4Fe-4S] cluster</name>
        <dbReference type="ChEBI" id="CHEBI:49883"/>
    </cofactor>
    <text evidence="1">Binds 1 [4Fe-4S] cluster per dimer.</text>
</comment>
<comment type="subunit">
    <text evidence="1">Homodimer.</text>
</comment>
<comment type="PTM">
    <text evidence="1">The reversible ADP-ribosylation of Arg-97 inactivates the nitrogenase reductase and regulates nitrogenase activity.</text>
</comment>
<comment type="similarity">
    <text evidence="1">Belongs to the NifH/BchL/ChlL family.</text>
</comment>
<reference key="1">
    <citation type="submission" date="2008-06" db="EMBL/GenBank/DDBJ databases">
        <title>Complete sequence of Chlorobium phaeobacteroides BS1.</title>
        <authorList>
            <consortium name="US DOE Joint Genome Institute"/>
            <person name="Lucas S."/>
            <person name="Copeland A."/>
            <person name="Lapidus A."/>
            <person name="Glavina del Rio T."/>
            <person name="Dalin E."/>
            <person name="Tice H."/>
            <person name="Bruce D."/>
            <person name="Goodwin L."/>
            <person name="Pitluck S."/>
            <person name="Schmutz J."/>
            <person name="Larimer F."/>
            <person name="Land M."/>
            <person name="Hauser L."/>
            <person name="Kyrpides N."/>
            <person name="Ovchinnikova G."/>
            <person name="Li T."/>
            <person name="Liu Z."/>
            <person name="Zhao F."/>
            <person name="Overmann J."/>
            <person name="Bryant D.A."/>
            <person name="Richardson P."/>
        </authorList>
    </citation>
    <scope>NUCLEOTIDE SEQUENCE [LARGE SCALE GENOMIC DNA]</scope>
    <source>
        <strain>BS1</strain>
    </source>
</reference>
<name>NIFH_CHLPB</name>
<protein>
    <recommendedName>
        <fullName evidence="1">Nitrogenase iron protein</fullName>
        <ecNumber evidence="1">1.18.6.1</ecNumber>
    </recommendedName>
    <alternativeName>
        <fullName evidence="1">Nitrogenase Fe protein</fullName>
    </alternativeName>
    <alternativeName>
        <fullName evidence="1">Nitrogenase component II</fullName>
    </alternativeName>
    <alternativeName>
        <fullName evidence="1">Nitrogenase reductase</fullName>
    </alternativeName>
</protein>
<proteinExistence type="inferred from homology"/>
<accession>B3EL81</accession>